<sequence length="33" mass="3324">GFFALIPKIISSPLFKTLLSAVGSALSSSGGQE</sequence>
<evidence type="ECO:0000250" key="1"/>
<evidence type="ECO:0000269" key="2">
    <source>
    </source>
</evidence>
<evidence type="ECO:0000269" key="3">
    <source>
    </source>
</evidence>
<evidence type="ECO:0000305" key="4"/>
<evidence type="ECO:0007829" key="5">
    <source>
        <dbReference type="PDB" id="1XC0"/>
    </source>
</evidence>
<organism>
    <name type="scientific">Pardachirus marmoratus</name>
    <name type="common">Finless sole</name>
    <name type="synonym">Achirus marmoratus</name>
    <dbReference type="NCBI Taxonomy" id="31087"/>
    <lineage>
        <taxon>Eukaryota</taxon>
        <taxon>Metazoa</taxon>
        <taxon>Chordata</taxon>
        <taxon>Craniata</taxon>
        <taxon>Vertebrata</taxon>
        <taxon>Euteleostomi</taxon>
        <taxon>Actinopterygii</taxon>
        <taxon>Neopterygii</taxon>
        <taxon>Teleostei</taxon>
        <taxon>Neoteleostei</taxon>
        <taxon>Acanthomorphata</taxon>
        <taxon>Carangaria</taxon>
        <taxon>Pleuronectiformes</taxon>
        <taxon>Pleuronectoidei</taxon>
        <taxon>Soleidae</taxon>
        <taxon>Pardachirus</taxon>
    </lineage>
</organism>
<accession>P81861</accession>
<proteinExistence type="evidence at protein level"/>
<reference key="1">
    <citation type="journal article" date="1988" name="FEBS Lett.">
        <title>Sequencing and synthesis of pardaxin, a polypeptide from the Red sea moses sole with ionophore activity.</title>
        <authorList>
            <person name="Shai Y."/>
            <person name="Fox J."/>
            <person name="Caratsch C."/>
            <person name="Shih Y.-L."/>
            <person name="Edwards C."/>
            <person name="Lazarovici P."/>
        </authorList>
    </citation>
    <scope>PROTEIN SEQUENCE</scope>
    <scope>SYNTHESIS</scope>
    <source>
        <tissue>Skin secretion</tissue>
    </source>
</reference>
<reference key="2">
    <citation type="journal article" date="2002" name="Biophys. J.">
        <title>Membrane composition determines pardaxin's mechanism of lipid bilayer disruption.</title>
        <authorList>
            <person name="Hallock K.J."/>
            <person name="Lee D.K."/>
            <person name="Omnaas J."/>
            <person name="Mosberg H.I."/>
            <person name="Ramamoorthy A."/>
        </authorList>
    </citation>
    <scope>FUNCTION</scope>
    <scope>SYNTHESIS</scope>
</reference>
<reference key="3">
    <citation type="journal article" date="2004" name="J. Biol. Chem.">
        <title>Structure and orientation of pardaxin determined by NMR experiments in model membranes.</title>
        <authorList>
            <person name="Porcelli F."/>
            <person name="Buck B."/>
            <person name="Lee D.-K."/>
            <person name="Hallock K.J."/>
            <person name="Ramamoorthy A."/>
            <person name="Veglia G."/>
        </authorList>
    </citation>
    <scope>STRUCTURE BY NMR</scope>
    <scope>SYNTHESIS</scope>
</reference>
<reference key="4">
    <citation type="journal article" date="2010" name="J. Biol. Chem.">
        <title>NMR structure of pardaxin, a pore-forming antimicrobial peptide, in lipopolysaccharide micelles: mechanism of outer membrane permeabilization.</title>
        <authorList>
            <person name="Bhunia A."/>
            <person name="Domadia P.N."/>
            <person name="Torres J."/>
            <person name="Hallock K.J."/>
            <person name="Ramamoorthy A."/>
            <person name="Bhattacharjya S."/>
        </authorList>
    </citation>
    <scope>STRUCTURE BY NMR IN COMPLEX WITH LIPOPOLYSACCHARIDE MICELLES</scope>
    <scope>FUNCTION</scope>
    <scope>SUBCELLULAR LOCATION</scope>
    <scope>CIRCULAR DICHROISM</scope>
</reference>
<name>PAP4_PARMA</name>
<keyword id="KW-0002">3D-structure</keyword>
<keyword id="KW-0903">Direct protein sequencing</keyword>
<keyword id="KW-0406">Ion transport</keyword>
<keyword id="KW-0472">Membrane</keyword>
<keyword id="KW-0964">Secreted</keyword>
<keyword id="KW-1052">Target cell membrane</keyword>
<keyword id="KW-1053">Target membrane</keyword>
<keyword id="KW-0800">Toxin</keyword>
<keyword id="KW-0812">Transmembrane</keyword>
<keyword id="KW-0813">Transport</keyword>
<feature type="peptide" id="PRO_0000044785" description="Pardaxin P-4">
    <location>
        <begin position="1"/>
        <end position="33"/>
    </location>
</feature>
<feature type="strand" evidence="5">
    <location>
        <begin position="3"/>
        <end position="5"/>
    </location>
</feature>
<feature type="helix" evidence="5">
    <location>
        <begin position="6"/>
        <end position="9"/>
    </location>
</feature>
<feature type="turn" evidence="5">
    <location>
        <begin position="10"/>
        <end position="14"/>
    </location>
</feature>
<feature type="helix" evidence="5">
    <location>
        <begin position="15"/>
        <end position="25"/>
    </location>
</feature>
<feature type="turn" evidence="5">
    <location>
        <begin position="26"/>
        <end position="31"/>
    </location>
</feature>
<dbReference type="PDB" id="1XC0">
    <property type="method" value="NMR"/>
    <property type="chains" value="A=1-33"/>
</dbReference>
<dbReference type="PDB" id="2KNS">
    <property type="method" value="NMR"/>
    <property type="chains" value="A=1-33"/>
</dbReference>
<dbReference type="PDBsum" id="1XC0"/>
<dbReference type="PDBsum" id="2KNS"/>
<dbReference type="SMR" id="P81861"/>
<dbReference type="TCDB" id="1.A.66.1.1">
    <property type="family name" value="the pardaxin (pardaxin) family"/>
</dbReference>
<dbReference type="EvolutionaryTrace" id="P81861"/>
<dbReference type="GO" id="GO:0005576">
    <property type="term" value="C:extracellular region"/>
    <property type="evidence" value="ECO:0007669"/>
    <property type="project" value="UniProtKB-SubCell"/>
</dbReference>
<dbReference type="GO" id="GO:0016020">
    <property type="term" value="C:membrane"/>
    <property type="evidence" value="ECO:0007669"/>
    <property type="project" value="UniProtKB-KW"/>
</dbReference>
<dbReference type="GO" id="GO:0044218">
    <property type="term" value="C:other organism cell membrane"/>
    <property type="evidence" value="ECO:0007669"/>
    <property type="project" value="UniProtKB-KW"/>
</dbReference>
<dbReference type="GO" id="GO:0090729">
    <property type="term" value="F:toxin activity"/>
    <property type="evidence" value="ECO:0007669"/>
    <property type="project" value="UniProtKB-KW"/>
</dbReference>
<dbReference type="GO" id="GO:0006811">
    <property type="term" value="P:monoatomic ion transport"/>
    <property type="evidence" value="ECO:0007669"/>
    <property type="project" value="UniProtKB-KW"/>
</dbReference>
<dbReference type="InterPro" id="IPR009990">
    <property type="entry name" value="Pardaxin"/>
</dbReference>
<dbReference type="Pfam" id="PF07425">
    <property type="entry name" value="Pardaxin"/>
    <property type="match status" value="1"/>
</dbReference>
<dbReference type="PIRSF" id="PIRSF037561">
    <property type="entry name" value="Pardaxin"/>
    <property type="match status" value="1"/>
</dbReference>
<comment type="function">
    <text evidence="2 3">Exhibits unusual shark repellent and surfactant properties. Forms voltage-dependent, ion-permeable channels in membranes. At high concentration causes cell membrane lysis.</text>
</comment>
<comment type="subunit">
    <text evidence="1">Monomer. In aqueous solution exists as a tetramer (By similarity).</text>
</comment>
<comment type="subcellular location">
    <subcellularLocation>
        <location evidence="3">Secreted</location>
    </subcellularLocation>
    <subcellularLocation>
        <location evidence="3">Target cell membrane</location>
    </subcellularLocation>
    <text>Forms a helical membrane channel in the prey.</text>
</comment>
<comment type="domain">
    <text>Consists of a C-terminal hydrophilic region and a predominantly hydrophobic remainder.</text>
</comment>
<comment type="similarity">
    <text evidence="4">Belongs to the pardaxin family.</text>
</comment>
<protein>
    <recommendedName>
        <fullName>Pardaxin P-4</fullName>
    </recommendedName>
    <alternativeName>
        <fullName>Pardaxin P1a</fullName>
    </alternativeName>
    <alternativeName>
        <fullName>Pardaxin Pa4</fullName>
    </alternativeName>
</protein>